<protein>
    <recommendedName>
        <fullName>Protein SHI RELATED SEQUENCE 8</fullName>
    </recommendedName>
</protein>
<dbReference type="EMBL" id="AC069557">
    <property type="status" value="NOT_ANNOTATED_CDS"/>
    <property type="molecule type" value="Genomic_DNA"/>
</dbReference>
<dbReference type="EMBL" id="CP002688">
    <property type="protein sequence ID" value="AED93889.1"/>
    <property type="molecule type" value="Genomic_DNA"/>
</dbReference>
<dbReference type="RefSeq" id="NP_198306.1">
    <molecule id="F4KH89-1"/>
    <property type="nucleotide sequence ID" value="NM_122845.1"/>
</dbReference>
<dbReference type="STRING" id="3702.F4KH89"/>
<dbReference type="PaxDb" id="3702-AT5G33210.1"/>
<dbReference type="ProteomicsDB" id="226569">
    <molecule id="F4KH89-1"/>
</dbReference>
<dbReference type="EnsemblPlants" id="AT5G33210.1">
    <molecule id="F4KH89-1"/>
    <property type="protein sequence ID" value="AT5G33210.1"/>
    <property type="gene ID" value="AT5G33210"/>
</dbReference>
<dbReference type="GeneID" id="833279"/>
<dbReference type="Gramene" id="AT5G33210.1">
    <molecule id="F4KH89-1"/>
    <property type="protein sequence ID" value="AT5G33210.1"/>
    <property type="gene ID" value="AT5G33210"/>
</dbReference>
<dbReference type="KEGG" id="ath:AT5G33210"/>
<dbReference type="Araport" id="AT5G33210"/>
<dbReference type="TAIR" id="AT5G33210">
    <property type="gene designation" value="SRS8"/>
</dbReference>
<dbReference type="eggNOG" id="ENOG502QQ15">
    <property type="taxonomic scope" value="Eukaryota"/>
</dbReference>
<dbReference type="HOGENOM" id="CLU_1549735_0_0_1"/>
<dbReference type="InParanoid" id="F4KH89"/>
<dbReference type="PhylomeDB" id="F4KH89"/>
<dbReference type="Proteomes" id="UP000006548">
    <property type="component" value="Chromosome 5"/>
</dbReference>
<dbReference type="ExpressionAtlas" id="F4KH89">
    <property type="expression patterns" value="baseline and differential"/>
</dbReference>
<dbReference type="GO" id="GO:0005634">
    <property type="term" value="C:nucleus"/>
    <property type="evidence" value="ECO:0000250"/>
    <property type="project" value="UniProtKB"/>
</dbReference>
<dbReference type="GO" id="GO:0003677">
    <property type="term" value="F:DNA binding"/>
    <property type="evidence" value="ECO:0007669"/>
    <property type="project" value="UniProtKB-KW"/>
</dbReference>
<dbReference type="GO" id="GO:0003700">
    <property type="term" value="F:DNA-binding transcription factor activity"/>
    <property type="evidence" value="ECO:0007669"/>
    <property type="project" value="InterPro"/>
</dbReference>
<dbReference type="GO" id="GO:0046872">
    <property type="term" value="F:metal ion binding"/>
    <property type="evidence" value="ECO:0007669"/>
    <property type="project" value="UniProtKB-KW"/>
</dbReference>
<dbReference type="GO" id="GO:0009851">
    <property type="term" value="P:auxin biosynthetic process"/>
    <property type="evidence" value="ECO:0007669"/>
    <property type="project" value="UniProtKB-KW"/>
</dbReference>
<dbReference type="GO" id="GO:0009734">
    <property type="term" value="P:auxin-activated signaling pathway"/>
    <property type="evidence" value="ECO:0007669"/>
    <property type="project" value="UniProtKB-KW"/>
</dbReference>
<dbReference type="InterPro" id="IPR007818">
    <property type="entry name" value="SHI"/>
</dbReference>
<dbReference type="InterPro" id="IPR006510">
    <property type="entry name" value="Znf_LRP1"/>
</dbReference>
<dbReference type="NCBIfam" id="TIGR01623">
    <property type="entry name" value="put_zinc_LRP1"/>
    <property type="match status" value="1"/>
</dbReference>
<dbReference type="PANTHER" id="PTHR31604">
    <property type="entry name" value="PROTEIN LATERAL ROOT PRIMORDIUM 1"/>
    <property type="match status" value="1"/>
</dbReference>
<dbReference type="PANTHER" id="PTHR31604:SF36">
    <property type="entry name" value="PROTEIN SHI RELATED SEQUENCE 1-RELATED"/>
    <property type="match status" value="1"/>
</dbReference>
<dbReference type="Pfam" id="PF05142">
    <property type="entry name" value="DUF702"/>
    <property type="match status" value="1"/>
</dbReference>
<organism>
    <name type="scientific">Arabidopsis thaliana</name>
    <name type="common">Mouse-ear cress</name>
    <dbReference type="NCBI Taxonomy" id="3702"/>
    <lineage>
        <taxon>Eukaryota</taxon>
        <taxon>Viridiplantae</taxon>
        <taxon>Streptophyta</taxon>
        <taxon>Embryophyta</taxon>
        <taxon>Tracheophyta</taxon>
        <taxon>Spermatophyta</taxon>
        <taxon>Magnoliopsida</taxon>
        <taxon>eudicotyledons</taxon>
        <taxon>Gunneridae</taxon>
        <taxon>Pentapetalae</taxon>
        <taxon>rosids</taxon>
        <taxon>malvids</taxon>
        <taxon>Brassicales</taxon>
        <taxon>Brassicaceae</taxon>
        <taxon>Camelineae</taxon>
        <taxon>Arabidopsis</taxon>
    </lineage>
</organism>
<proteinExistence type="inferred from homology"/>
<gene>
    <name type="primary">SRS8</name>
    <name type="ordered locus">At5g33210</name>
</gene>
<sequence length="173" mass="19543">MDMNMEKIFEDSVPCRVRAKRGCATHPRSIAERAAMMMIRSGGSGGSGGVSCQDFGNQAKKDCSHMRCRTCCKSRGFECSTHVRSTWVPATKRRERQQQLATVQPQTQLPRGESVPKRHRENLPATSSSLVCTRIPFHSGICHCNVKYLFMCIYICLLLYGREIYNEMQAAFL</sequence>
<feature type="chain" id="PRO_0000424580" description="Protein SHI RELATED SEQUENCE 8">
    <location>
        <begin position="1"/>
        <end position="173"/>
    </location>
</feature>
<feature type="DNA-binding region" description="Zn(2)-C6 fungal-type; degenerate" evidence="1">
    <location>
        <begin position="52"/>
        <end position="79"/>
    </location>
</feature>
<feature type="region of interest" description="Disordered" evidence="2">
    <location>
        <begin position="100"/>
        <end position="121"/>
    </location>
</feature>
<feature type="compositionally biased region" description="Low complexity" evidence="2">
    <location>
        <begin position="100"/>
        <end position="110"/>
    </location>
</feature>
<feature type="binding site" evidence="1">
    <location>
        <position position="52"/>
    </location>
    <ligand>
        <name>Zn(2+)</name>
        <dbReference type="ChEBI" id="CHEBI:29105"/>
        <label>1</label>
    </ligand>
</feature>
<feature type="binding site" evidence="1">
    <location>
        <position position="52"/>
    </location>
    <ligand>
        <name>Zn(2+)</name>
        <dbReference type="ChEBI" id="CHEBI:29105"/>
        <label>2</label>
    </ligand>
</feature>
<feature type="binding site" evidence="1">
    <location>
        <position position="63"/>
    </location>
    <ligand>
        <name>Zn(2+)</name>
        <dbReference type="ChEBI" id="CHEBI:29105"/>
        <label>1</label>
    </ligand>
</feature>
<feature type="binding site" evidence="1">
    <location>
        <position position="68"/>
    </location>
    <ligand>
        <name>Zn(2+)</name>
        <dbReference type="ChEBI" id="CHEBI:29105"/>
        <label>1</label>
    </ligand>
</feature>
<feature type="binding site" evidence="1">
    <location>
        <position position="68"/>
    </location>
    <ligand>
        <name>Zn(2+)</name>
        <dbReference type="ChEBI" id="CHEBI:29105"/>
        <label>2</label>
    </ligand>
</feature>
<feature type="binding site" evidence="1">
    <location>
        <position position="72"/>
    </location>
    <ligand>
        <name>Zn(2+)</name>
        <dbReference type="ChEBI" id="CHEBI:29105"/>
        <label>2</label>
    </ligand>
</feature>
<feature type="binding site" evidence="1">
    <location>
        <position position="79"/>
    </location>
    <ligand>
        <name>Zn(2+)</name>
        <dbReference type="ChEBI" id="CHEBI:29105"/>
        <label>2</label>
    </ligand>
</feature>
<accession>F4KH89</accession>
<reference key="1">
    <citation type="journal article" date="2000" name="Nature">
        <title>Sequence and analysis of chromosome 5 of the plant Arabidopsis thaliana.</title>
        <authorList>
            <person name="Tabata S."/>
            <person name="Kaneko T."/>
            <person name="Nakamura Y."/>
            <person name="Kotani H."/>
            <person name="Kato T."/>
            <person name="Asamizu E."/>
            <person name="Miyajima N."/>
            <person name="Sasamoto S."/>
            <person name="Kimura T."/>
            <person name="Hosouchi T."/>
            <person name="Kawashima K."/>
            <person name="Kohara M."/>
            <person name="Matsumoto M."/>
            <person name="Matsuno A."/>
            <person name="Muraki A."/>
            <person name="Nakayama S."/>
            <person name="Nakazaki N."/>
            <person name="Naruo K."/>
            <person name="Okumura S."/>
            <person name="Shinpo S."/>
            <person name="Takeuchi C."/>
            <person name="Wada T."/>
            <person name="Watanabe A."/>
            <person name="Yamada M."/>
            <person name="Yasuda M."/>
            <person name="Sato S."/>
            <person name="de la Bastide M."/>
            <person name="Huang E."/>
            <person name="Spiegel L."/>
            <person name="Gnoj L."/>
            <person name="O'Shaughnessy A."/>
            <person name="Preston R."/>
            <person name="Habermann K."/>
            <person name="Murray J."/>
            <person name="Johnson D."/>
            <person name="Rohlfing T."/>
            <person name="Nelson J."/>
            <person name="Stoneking T."/>
            <person name="Pepin K."/>
            <person name="Spieth J."/>
            <person name="Sekhon M."/>
            <person name="Armstrong J."/>
            <person name="Becker M."/>
            <person name="Belter E."/>
            <person name="Cordum H."/>
            <person name="Cordes M."/>
            <person name="Courtney L."/>
            <person name="Courtney W."/>
            <person name="Dante M."/>
            <person name="Du H."/>
            <person name="Edwards J."/>
            <person name="Fryman J."/>
            <person name="Haakensen B."/>
            <person name="Lamar E."/>
            <person name="Latreille P."/>
            <person name="Leonard S."/>
            <person name="Meyer R."/>
            <person name="Mulvaney E."/>
            <person name="Ozersky P."/>
            <person name="Riley A."/>
            <person name="Strowmatt C."/>
            <person name="Wagner-McPherson C."/>
            <person name="Wollam A."/>
            <person name="Yoakum M."/>
            <person name="Bell M."/>
            <person name="Dedhia N."/>
            <person name="Parnell L."/>
            <person name="Shah R."/>
            <person name="Rodriguez M."/>
            <person name="Hoon See L."/>
            <person name="Vil D."/>
            <person name="Baker J."/>
            <person name="Kirchoff K."/>
            <person name="Toth K."/>
            <person name="King L."/>
            <person name="Bahret A."/>
            <person name="Miller B."/>
            <person name="Marra M.A."/>
            <person name="Martienssen R."/>
            <person name="McCombie W.R."/>
            <person name="Wilson R.K."/>
            <person name="Murphy G."/>
            <person name="Bancroft I."/>
            <person name="Volckaert G."/>
            <person name="Wambutt R."/>
            <person name="Duesterhoeft A."/>
            <person name="Stiekema W."/>
            <person name="Pohl T."/>
            <person name="Entian K.-D."/>
            <person name="Terryn N."/>
            <person name="Hartley N."/>
            <person name="Bent E."/>
            <person name="Johnson S."/>
            <person name="Langham S.-A."/>
            <person name="McCullagh B."/>
            <person name="Robben J."/>
            <person name="Grymonprez B."/>
            <person name="Zimmermann W."/>
            <person name="Ramsperger U."/>
            <person name="Wedler H."/>
            <person name="Balke K."/>
            <person name="Wedler E."/>
            <person name="Peters S."/>
            <person name="van Staveren M."/>
            <person name="Dirkse W."/>
            <person name="Mooijman P."/>
            <person name="Klein Lankhorst R."/>
            <person name="Weitzenegger T."/>
            <person name="Bothe G."/>
            <person name="Rose M."/>
            <person name="Hauf J."/>
            <person name="Berneiser S."/>
            <person name="Hempel S."/>
            <person name="Feldpausch M."/>
            <person name="Lamberth S."/>
            <person name="Villarroel R."/>
            <person name="Gielen J."/>
            <person name="Ardiles W."/>
            <person name="Bents O."/>
            <person name="Lemcke K."/>
            <person name="Kolesov G."/>
            <person name="Mayer K.F.X."/>
            <person name="Rudd S."/>
            <person name="Schoof H."/>
            <person name="Schueller C."/>
            <person name="Zaccaria P."/>
            <person name="Mewes H.-W."/>
            <person name="Bevan M."/>
            <person name="Fransz P.F."/>
        </authorList>
    </citation>
    <scope>NUCLEOTIDE SEQUENCE [LARGE SCALE GENOMIC DNA]</scope>
    <source>
        <strain>cv. Columbia</strain>
    </source>
</reference>
<reference key="2">
    <citation type="journal article" date="2017" name="Plant J.">
        <title>Araport11: a complete reannotation of the Arabidopsis thaliana reference genome.</title>
        <authorList>
            <person name="Cheng C.Y."/>
            <person name="Krishnakumar V."/>
            <person name="Chan A.P."/>
            <person name="Thibaud-Nissen F."/>
            <person name="Schobel S."/>
            <person name="Town C.D."/>
        </authorList>
    </citation>
    <scope>GENOME REANNOTATION</scope>
    <source>
        <strain>cv. Columbia</strain>
    </source>
</reference>
<reference key="3">
    <citation type="journal article" date="2006" name="Plant J.">
        <title>Functionally redundant SHI family genes regulate Arabidopsis gynoecium development in a dose-dependent manner.</title>
        <authorList>
            <person name="Kuusk S."/>
            <person name="Sohlberg J.J."/>
            <person name="Magnus Eklund D."/>
            <person name="Sundberg E."/>
        </authorList>
    </citation>
    <scope>GENE FAMILY</scope>
    <scope>NOMENCLATURE</scope>
</reference>
<reference key="4">
    <citation type="journal article" date="2011" name="Plant Physiol.">
        <title>Expression of Arabidopsis SHORT INTERNODES/STYLISH family genes in auxin biosynthesis zones of aerial organs is dependent on a GCC box-like regulatory element.</title>
        <authorList>
            <person name="Eklund D.M."/>
            <person name="Cierlik I."/>
            <person name="Staaldal V."/>
            <person name="Claes A.R."/>
            <person name="Vestman D."/>
            <person name="Chandler J."/>
            <person name="Sundberg E."/>
        </authorList>
    </citation>
    <scope>GENE FAMILY</scope>
</reference>
<name>SRS8_ARATH</name>
<evidence type="ECO:0000250" key="1"/>
<evidence type="ECO:0000256" key="2">
    <source>
        <dbReference type="SAM" id="MobiDB-lite"/>
    </source>
</evidence>
<evidence type="ECO:0000305" key="3"/>
<keyword id="KW-0010">Activator</keyword>
<keyword id="KW-0025">Alternative splicing</keyword>
<keyword id="KW-0073">Auxin biosynthesis</keyword>
<keyword id="KW-0927">Auxin signaling pathway</keyword>
<keyword id="KW-0217">Developmental protein</keyword>
<keyword id="KW-0238">DNA-binding</keyword>
<keyword id="KW-0479">Metal-binding</keyword>
<keyword id="KW-0539">Nucleus</keyword>
<keyword id="KW-1185">Reference proteome</keyword>
<keyword id="KW-0862">Zinc</keyword>
<comment type="function">
    <text evidence="1">Transcription activator that binds DNA on 5'-ACTCTAC-3' and promotes auxin homeostasis-regulating gene expression (e.g. YUC genes), as well as genes affecting stamen development, cell expansion and timing of flowering. Synergistically with other SHI-related proteins, regulates gynoecium, stamen and leaf development in a dose-dependent manner, controlling apical-basal patterning. Promotes style and stigma formation, and influence vascular development during gynoecium development. May also have a role in the formation and/or maintenance of the shoot apical meristem (SAM) (By similarity).</text>
</comment>
<comment type="subcellular location">
    <subcellularLocation>
        <location evidence="1">Nucleus</location>
    </subcellularLocation>
</comment>
<comment type="alternative products">
    <event type="alternative splicing"/>
    <isoform>
        <id>F4KH89-1</id>
        <name>1</name>
        <sequence type="displayed"/>
    </isoform>
    <text>Additional isoforms seem to exist.</text>
</comment>
<comment type="similarity">
    <text evidence="3">Belongs to the SHI protein family.</text>
</comment>
<comment type="caution">
    <text evidence="3">May be the product of a pseudogene.</text>
</comment>